<feature type="chain" id="PRO_0000224876" description="Holliday junction branch migration complex subunit RuvA">
    <location>
        <begin position="1"/>
        <end position="203"/>
    </location>
</feature>
<feature type="region of interest" description="Domain I" evidence="1">
    <location>
        <begin position="1"/>
        <end position="63"/>
    </location>
</feature>
<feature type="region of interest" description="Domain II" evidence="1">
    <location>
        <begin position="64"/>
        <end position="142"/>
    </location>
</feature>
<feature type="region of interest" description="Flexible linker" evidence="1">
    <location>
        <begin position="143"/>
        <end position="153"/>
    </location>
</feature>
<feature type="region of interest" description="Domain III" evidence="1">
    <location>
        <begin position="153"/>
        <end position="203"/>
    </location>
</feature>
<name>RUVA_LATSS</name>
<sequence length="203" mass="22143">MYEYLKGLVTAVNPYYVVLEVQGIGYQLQVANPYRYTESMSEVVQIFVHQAVRDTDITLFGFYDLDEKQLFQKLISVSGIGPKSALAILANSDHSGLIQAIMNDDIGYLTKFPGVGKKTAQQIALDLKGKLGDLEQSATLVGQTAIDLGSQGDSPELSDALAALSALGYSAREVKAITPKLTDFAAQTTDQYLREGLRLLMKK</sequence>
<evidence type="ECO:0000255" key="1">
    <source>
        <dbReference type="HAMAP-Rule" id="MF_00031"/>
    </source>
</evidence>
<protein>
    <recommendedName>
        <fullName evidence="1">Holliday junction branch migration complex subunit RuvA</fullName>
    </recommendedName>
</protein>
<gene>
    <name evidence="1" type="primary">ruvA</name>
    <name type="ordered locus">LCA_0366</name>
</gene>
<proteinExistence type="inferred from homology"/>
<dbReference type="EMBL" id="CR936503">
    <property type="protein sequence ID" value="CAI54667.1"/>
    <property type="molecule type" value="Genomic_DNA"/>
</dbReference>
<dbReference type="RefSeq" id="WP_011374075.1">
    <property type="nucleotide sequence ID" value="NC_007576.1"/>
</dbReference>
<dbReference type="SMR" id="Q38YR0"/>
<dbReference type="STRING" id="314315.LCA_0366"/>
<dbReference type="KEGG" id="lsa:LCA_0366"/>
<dbReference type="eggNOG" id="COG0632">
    <property type="taxonomic scope" value="Bacteria"/>
</dbReference>
<dbReference type="HOGENOM" id="CLU_087936_1_0_9"/>
<dbReference type="OrthoDB" id="5293449at2"/>
<dbReference type="Proteomes" id="UP000002707">
    <property type="component" value="Chromosome"/>
</dbReference>
<dbReference type="GO" id="GO:0005737">
    <property type="term" value="C:cytoplasm"/>
    <property type="evidence" value="ECO:0007669"/>
    <property type="project" value="UniProtKB-SubCell"/>
</dbReference>
<dbReference type="GO" id="GO:0009379">
    <property type="term" value="C:Holliday junction helicase complex"/>
    <property type="evidence" value="ECO:0007669"/>
    <property type="project" value="InterPro"/>
</dbReference>
<dbReference type="GO" id="GO:0048476">
    <property type="term" value="C:Holliday junction resolvase complex"/>
    <property type="evidence" value="ECO:0007669"/>
    <property type="project" value="UniProtKB-UniRule"/>
</dbReference>
<dbReference type="GO" id="GO:0005524">
    <property type="term" value="F:ATP binding"/>
    <property type="evidence" value="ECO:0007669"/>
    <property type="project" value="InterPro"/>
</dbReference>
<dbReference type="GO" id="GO:0000400">
    <property type="term" value="F:four-way junction DNA binding"/>
    <property type="evidence" value="ECO:0007669"/>
    <property type="project" value="UniProtKB-UniRule"/>
</dbReference>
<dbReference type="GO" id="GO:0009378">
    <property type="term" value="F:four-way junction helicase activity"/>
    <property type="evidence" value="ECO:0007669"/>
    <property type="project" value="InterPro"/>
</dbReference>
<dbReference type="GO" id="GO:0006310">
    <property type="term" value="P:DNA recombination"/>
    <property type="evidence" value="ECO:0007669"/>
    <property type="project" value="UniProtKB-UniRule"/>
</dbReference>
<dbReference type="GO" id="GO:0006281">
    <property type="term" value="P:DNA repair"/>
    <property type="evidence" value="ECO:0007669"/>
    <property type="project" value="UniProtKB-UniRule"/>
</dbReference>
<dbReference type="CDD" id="cd14332">
    <property type="entry name" value="UBA_RuvA_C"/>
    <property type="match status" value="1"/>
</dbReference>
<dbReference type="Gene3D" id="1.10.150.20">
    <property type="entry name" value="5' to 3' exonuclease, C-terminal subdomain"/>
    <property type="match status" value="1"/>
</dbReference>
<dbReference type="Gene3D" id="2.40.50.140">
    <property type="entry name" value="Nucleic acid-binding proteins"/>
    <property type="match status" value="1"/>
</dbReference>
<dbReference type="HAMAP" id="MF_00031">
    <property type="entry name" value="DNA_HJ_migration_RuvA"/>
    <property type="match status" value="1"/>
</dbReference>
<dbReference type="InterPro" id="IPR013849">
    <property type="entry name" value="DNA_helicase_Holl-junc_RuvA_I"/>
</dbReference>
<dbReference type="InterPro" id="IPR003583">
    <property type="entry name" value="Hlx-hairpin-Hlx_DNA-bd_motif"/>
</dbReference>
<dbReference type="InterPro" id="IPR012340">
    <property type="entry name" value="NA-bd_OB-fold"/>
</dbReference>
<dbReference type="InterPro" id="IPR000085">
    <property type="entry name" value="RuvA"/>
</dbReference>
<dbReference type="InterPro" id="IPR010994">
    <property type="entry name" value="RuvA_2-like"/>
</dbReference>
<dbReference type="InterPro" id="IPR011114">
    <property type="entry name" value="RuvA_C"/>
</dbReference>
<dbReference type="InterPro" id="IPR036267">
    <property type="entry name" value="RuvA_C_sf"/>
</dbReference>
<dbReference type="NCBIfam" id="TIGR00084">
    <property type="entry name" value="ruvA"/>
    <property type="match status" value="1"/>
</dbReference>
<dbReference type="Pfam" id="PF14520">
    <property type="entry name" value="HHH_5"/>
    <property type="match status" value="1"/>
</dbReference>
<dbReference type="Pfam" id="PF07499">
    <property type="entry name" value="RuvA_C"/>
    <property type="match status" value="1"/>
</dbReference>
<dbReference type="Pfam" id="PF01330">
    <property type="entry name" value="RuvA_N"/>
    <property type="match status" value="1"/>
</dbReference>
<dbReference type="SMART" id="SM00278">
    <property type="entry name" value="HhH1"/>
    <property type="match status" value="2"/>
</dbReference>
<dbReference type="SUPFAM" id="SSF46929">
    <property type="entry name" value="DNA helicase RuvA subunit, C-terminal domain"/>
    <property type="match status" value="1"/>
</dbReference>
<dbReference type="SUPFAM" id="SSF50249">
    <property type="entry name" value="Nucleic acid-binding proteins"/>
    <property type="match status" value="1"/>
</dbReference>
<dbReference type="SUPFAM" id="SSF47781">
    <property type="entry name" value="RuvA domain 2-like"/>
    <property type="match status" value="1"/>
</dbReference>
<organism>
    <name type="scientific">Latilactobacillus sakei subsp. sakei (strain 23K)</name>
    <name type="common">Lactobacillus sakei subsp. sakei</name>
    <dbReference type="NCBI Taxonomy" id="314315"/>
    <lineage>
        <taxon>Bacteria</taxon>
        <taxon>Bacillati</taxon>
        <taxon>Bacillota</taxon>
        <taxon>Bacilli</taxon>
        <taxon>Lactobacillales</taxon>
        <taxon>Lactobacillaceae</taxon>
        <taxon>Latilactobacillus</taxon>
    </lineage>
</organism>
<reference key="1">
    <citation type="journal article" date="2005" name="Nat. Biotechnol.">
        <title>The complete genome sequence of the meat-borne lactic acid bacterium Lactobacillus sakei 23K.</title>
        <authorList>
            <person name="Chaillou S."/>
            <person name="Champomier-Verges M.-C."/>
            <person name="Cornet M."/>
            <person name="Crutz-Le Coq A.-M."/>
            <person name="Dudez A.-M."/>
            <person name="Martin V."/>
            <person name="Beaufils S."/>
            <person name="Darbon-Rongere E."/>
            <person name="Bossy R."/>
            <person name="Loux V."/>
            <person name="Zagorec M."/>
        </authorList>
    </citation>
    <scope>NUCLEOTIDE SEQUENCE [LARGE SCALE GENOMIC DNA]</scope>
    <source>
        <strain>23K</strain>
    </source>
</reference>
<comment type="function">
    <text evidence="1">The RuvA-RuvB-RuvC complex processes Holliday junction (HJ) DNA during genetic recombination and DNA repair, while the RuvA-RuvB complex plays an important role in the rescue of blocked DNA replication forks via replication fork reversal (RFR). RuvA specifically binds to HJ cruciform DNA, conferring on it an open structure. The RuvB hexamer acts as an ATP-dependent pump, pulling dsDNA into and through the RuvAB complex. HJ branch migration allows RuvC to scan DNA until it finds its consensus sequence, where it cleaves and resolves the cruciform DNA.</text>
</comment>
<comment type="subunit">
    <text evidence="1">Homotetramer. Forms an RuvA(8)-RuvB(12)-Holliday junction (HJ) complex. HJ DNA is sandwiched between 2 RuvA tetramers; dsDNA enters through RuvA and exits via RuvB. An RuvB hexamer assembles on each DNA strand where it exits the tetramer. Each RuvB hexamer is contacted by two RuvA subunits (via domain III) on 2 adjacent RuvB subunits; this complex drives branch migration. In the full resolvosome a probable DNA-RuvA(4)-RuvB(12)-RuvC(2) complex forms which resolves the HJ.</text>
</comment>
<comment type="subcellular location">
    <subcellularLocation>
        <location evidence="1">Cytoplasm</location>
    </subcellularLocation>
</comment>
<comment type="domain">
    <text evidence="1">Has three domains with a flexible linker between the domains II and III and assumes an 'L' shape. Domain III is highly mobile and contacts RuvB.</text>
</comment>
<comment type="similarity">
    <text evidence="1">Belongs to the RuvA family.</text>
</comment>
<keyword id="KW-0963">Cytoplasm</keyword>
<keyword id="KW-0227">DNA damage</keyword>
<keyword id="KW-0233">DNA recombination</keyword>
<keyword id="KW-0234">DNA repair</keyword>
<keyword id="KW-0238">DNA-binding</keyword>
<keyword id="KW-1185">Reference proteome</keyword>
<accession>Q38YR0</accession>